<gene>
    <name evidence="1" type="primary">mnmG</name>
    <name evidence="1" type="synonym">gidA</name>
    <name type="ordered locus">Dgeo_2337</name>
</gene>
<dbReference type="EMBL" id="CP000359">
    <property type="protein sequence ID" value="ABF46629.1"/>
    <property type="status" value="ALT_INIT"/>
    <property type="molecule type" value="Genomic_DNA"/>
</dbReference>
<dbReference type="RefSeq" id="WP_041221445.1">
    <property type="nucleotide sequence ID" value="NC_008025.1"/>
</dbReference>
<dbReference type="SMR" id="Q1IVV5"/>
<dbReference type="STRING" id="319795.Dgeo_2337"/>
<dbReference type="KEGG" id="dge:Dgeo_2337"/>
<dbReference type="eggNOG" id="COG0445">
    <property type="taxonomic scope" value="Bacteria"/>
</dbReference>
<dbReference type="HOGENOM" id="CLU_007831_2_2_0"/>
<dbReference type="Proteomes" id="UP000002431">
    <property type="component" value="Chromosome"/>
</dbReference>
<dbReference type="GO" id="GO:0005829">
    <property type="term" value="C:cytosol"/>
    <property type="evidence" value="ECO:0007669"/>
    <property type="project" value="TreeGrafter"/>
</dbReference>
<dbReference type="GO" id="GO:0050660">
    <property type="term" value="F:flavin adenine dinucleotide binding"/>
    <property type="evidence" value="ECO:0007669"/>
    <property type="project" value="UniProtKB-UniRule"/>
</dbReference>
<dbReference type="GO" id="GO:0030488">
    <property type="term" value="P:tRNA methylation"/>
    <property type="evidence" value="ECO:0007669"/>
    <property type="project" value="TreeGrafter"/>
</dbReference>
<dbReference type="GO" id="GO:0002098">
    <property type="term" value="P:tRNA wobble uridine modification"/>
    <property type="evidence" value="ECO:0007669"/>
    <property type="project" value="InterPro"/>
</dbReference>
<dbReference type="FunFam" id="3.50.50.60:FF:000585">
    <property type="entry name" value="tRNA uridine 5-carboxymethylaminomethyl modification enzyme MnmG"/>
    <property type="match status" value="1"/>
</dbReference>
<dbReference type="Gene3D" id="3.50.50.60">
    <property type="entry name" value="FAD/NAD(P)-binding domain"/>
    <property type="match status" value="2"/>
</dbReference>
<dbReference type="Gene3D" id="1.10.150.570">
    <property type="entry name" value="GidA associated domain, C-terminal subdomain"/>
    <property type="match status" value="1"/>
</dbReference>
<dbReference type="Gene3D" id="1.10.10.1800">
    <property type="entry name" value="tRNA uridine 5-carboxymethylaminomethyl modification enzyme MnmG/GidA"/>
    <property type="match status" value="1"/>
</dbReference>
<dbReference type="HAMAP" id="MF_00129">
    <property type="entry name" value="MnmG_GidA"/>
    <property type="match status" value="1"/>
</dbReference>
<dbReference type="InterPro" id="IPR036188">
    <property type="entry name" value="FAD/NAD-bd_sf"/>
</dbReference>
<dbReference type="InterPro" id="IPR049312">
    <property type="entry name" value="GIDA_C_N"/>
</dbReference>
<dbReference type="InterPro" id="IPR004416">
    <property type="entry name" value="MnmG"/>
</dbReference>
<dbReference type="InterPro" id="IPR002218">
    <property type="entry name" value="MnmG-rel"/>
</dbReference>
<dbReference type="InterPro" id="IPR020595">
    <property type="entry name" value="MnmG-rel_CS"/>
</dbReference>
<dbReference type="InterPro" id="IPR026904">
    <property type="entry name" value="MnmG_C"/>
</dbReference>
<dbReference type="InterPro" id="IPR047001">
    <property type="entry name" value="MnmG_C_subdom"/>
</dbReference>
<dbReference type="InterPro" id="IPR044920">
    <property type="entry name" value="MnmG_C_subdom_sf"/>
</dbReference>
<dbReference type="InterPro" id="IPR040131">
    <property type="entry name" value="MnmG_N"/>
</dbReference>
<dbReference type="NCBIfam" id="TIGR00136">
    <property type="entry name" value="mnmG_gidA"/>
    <property type="match status" value="1"/>
</dbReference>
<dbReference type="PANTHER" id="PTHR11806">
    <property type="entry name" value="GLUCOSE INHIBITED DIVISION PROTEIN A"/>
    <property type="match status" value="1"/>
</dbReference>
<dbReference type="PANTHER" id="PTHR11806:SF0">
    <property type="entry name" value="PROTEIN MTO1 HOMOLOG, MITOCHONDRIAL"/>
    <property type="match status" value="1"/>
</dbReference>
<dbReference type="Pfam" id="PF01134">
    <property type="entry name" value="GIDA"/>
    <property type="match status" value="1"/>
</dbReference>
<dbReference type="Pfam" id="PF21680">
    <property type="entry name" value="GIDA_C_1st"/>
    <property type="match status" value="1"/>
</dbReference>
<dbReference type="Pfam" id="PF13932">
    <property type="entry name" value="SAM_GIDA_C"/>
    <property type="match status" value="1"/>
</dbReference>
<dbReference type="SMART" id="SM01228">
    <property type="entry name" value="GIDA_assoc_3"/>
    <property type="match status" value="1"/>
</dbReference>
<dbReference type="SUPFAM" id="SSF51905">
    <property type="entry name" value="FAD/NAD(P)-binding domain"/>
    <property type="match status" value="1"/>
</dbReference>
<dbReference type="PROSITE" id="PS01280">
    <property type="entry name" value="GIDA_1"/>
    <property type="match status" value="1"/>
</dbReference>
<dbReference type="PROSITE" id="PS01281">
    <property type="entry name" value="GIDA_2"/>
    <property type="match status" value="1"/>
</dbReference>
<organism>
    <name type="scientific">Deinococcus geothermalis (strain DSM 11300 / CIP 105573 / AG-3a)</name>
    <dbReference type="NCBI Taxonomy" id="319795"/>
    <lineage>
        <taxon>Bacteria</taxon>
        <taxon>Thermotogati</taxon>
        <taxon>Deinococcota</taxon>
        <taxon>Deinococci</taxon>
        <taxon>Deinococcales</taxon>
        <taxon>Deinococcaceae</taxon>
        <taxon>Deinococcus</taxon>
    </lineage>
</organism>
<reference key="1">
    <citation type="submission" date="2006-04" db="EMBL/GenBank/DDBJ databases">
        <title>Complete sequence of chromosome of Deinococcus geothermalis DSM 11300.</title>
        <authorList>
            <person name="Copeland A."/>
            <person name="Lucas S."/>
            <person name="Lapidus A."/>
            <person name="Barry K."/>
            <person name="Detter J.C."/>
            <person name="Glavina del Rio T."/>
            <person name="Hammon N."/>
            <person name="Israni S."/>
            <person name="Dalin E."/>
            <person name="Tice H."/>
            <person name="Pitluck S."/>
            <person name="Brettin T."/>
            <person name="Bruce D."/>
            <person name="Han C."/>
            <person name="Tapia R."/>
            <person name="Saunders E."/>
            <person name="Gilna P."/>
            <person name="Schmutz J."/>
            <person name="Larimer F."/>
            <person name="Land M."/>
            <person name="Hauser L."/>
            <person name="Kyrpides N."/>
            <person name="Kim E."/>
            <person name="Daly M.J."/>
            <person name="Fredrickson J.K."/>
            <person name="Makarova K.S."/>
            <person name="Gaidamakova E.K."/>
            <person name="Zhai M."/>
            <person name="Richardson P."/>
        </authorList>
    </citation>
    <scope>NUCLEOTIDE SEQUENCE [LARGE SCALE GENOMIC DNA]</scope>
    <source>
        <strain>DSM 11300 / CIP 105573 / AG-3a</strain>
    </source>
</reference>
<name>MNMG_DEIGD</name>
<protein>
    <recommendedName>
        <fullName evidence="1">tRNA uridine 5-carboxymethylaminomethyl modification enzyme MnmG</fullName>
    </recommendedName>
    <alternativeName>
        <fullName evidence="1">Glucose-inhibited division protein A</fullName>
    </alternativeName>
</protein>
<comment type="function">
    <text evidence="1">NAD-binding protein involved in the addition of a carboxymethylaminomethyl (cmnm) group at the wobble position (U34) of certain tRNAs, forming tRNA-cmnm(5)s(2)U34.</text>
</comment>
<comment type="cofactor">
    <cofactor evidence="1">
        <name>FAD</name>
        <dbReference type="ChEBI" id="CHEBI:57692"/>
    </cofactor>
</comment>
<comment type="subunit">
    <text evidence="1">Homodimer. Heterotetramer of two MnmE and two MnmG subunits.</text>
</comment>
<comment type="subcellular location">
    <subcellularLocation>
        <location evidence="1">Cytoplasm</location>
    </subcellularLocation>
</comment>
<comment type="similarity">
    <text evidence="1">Belongs to the MnmG family.</text>
</comment>
<comment type="sequence caution" evidence="3">
    <conflict type="erroneous initiation">
        <sequence resource="EMBL-CDS" id="ABF46629"/>
    </conflict>
</comment>
<accession>Q1IVV5</accession>
<feature type="chain" id="PRO_0000345261" description="tRNA uridine 5-carboxymethylaminomethyl modification enzyme MnmG">
    <location>
        <begin position="1"/>
        <end position="602"/>
    </location>
</feature>
<feature type="region of interest" description="Disordered" evidence="2">
    <location>
        <begin position="217"/>
        <end position="242"/>
    </location>
</feature>
<feature type="binding site" evidence="1">
    <location>
        <begin position="10"/>
        <end position="15"/>
    </location>
    <ligand>
        <name>FAD</name>
        <dbReference type="ChEBI" id="CHEBI:57692"/>
    </ligand>
</feature>
<feature type="binding site" evidence="1">
    <location>
        <begin position="267"/>
        <end position="281"/>
    </location>
    <ligand>
        <name>NAD(+)</name>
        <dbReference type="ChEBI" id="CHEBI:57540"/>
    </ligand>
</feature>
<proteinExistence type="inferred from homology"/>
<sequence>MRGWNVMVIGGGHAGLEAAWAAAKFARVAVLVSNPATVGRMPCNPAVGGPGKSQLVFEVQALGGLMGRLADDTAIHTRVLNASKGPAVQSLRVQNERDAYAERAQEILLGHSGIDVVRGEAADLEPDGCGGWFVVTTDGRRFHARSVVVAAGTFMRGVTWYGRYSRPEGRQGEPPSRFLSAPLARAGHRLKRYKTGTPPRVRADSVRFADLLEIPADPQPRGFTGRPGPRAAESPTWQTHTTPETHRLIQENLHESPMYAGDIAGLGPRYCPSIEDKVVRFAHHDRHLLFVEPDGVQTSEVYLQGFSSSLPPALQDRLVRSLPGFEAAVIQRYAYAVEYDVVDSTELTLNLESRLLPGIFTAGQINGTSGYEEAAAQGLVAGTAAARRALELEELQISRETSYLGVLLDDLVLKGSDEPYRMMTSRVEHRLIVRQDNADERLTELGVKLGLVDEDTQRAVQAKYRRVAEGIRALQMQRVQGQTGDAWLRRPEFALEDVEALGFKLPALSPEEREAVAIRVKYAGYIERAERQLAAEDRARELSLRGVAFGEIASLSNEAREKLERVRPLTVAQAAGIPGVRHADISALLVHLRRTGNVSRET</sequence>
<evidence type="ECO:0000255" key="1">
    <source>
        <dbReference type="HAMAP-Rule" id="MF_00129"/>
    </source>
</evidence>
<evidence type="ECO:0000256" key="2">
    <source>
        <dbReference type="SAM" id="MobiDB-lite"/>
    </source>
</evidence>
<evidence type="ECO:0000305" key="3"/>
<keyword id="KW-0963">Cytoplasm</keyword>
<keyword id="KW-0274">FAD</keyword>
<keyword id="KW-0285">Flavoprotein</keyword>
<keyword id="KW-0520">NAD</keyword>
<keyword id="KW-0819">tRNA processing</keyword>